<protein>
    <recommendedName>
        <fullName>C-phycoerythrin class 1 subunit beta</fullName>
    </recommendedName>
    <alternativeName>
        <fullName>C-phycoerythrin class I beta chain</fullName>
    </alternativeName>
</protein>
<keyword id="KW-0042">Antenna complex</keyword>
<keyword id="KW-0089">Bile pigment</keyword>
<keyword id="KW-0157">Chromophore</keyword>
<keyword id="KW-0249">Electron transport</keyword>
<keyword id="KW-0472">Membrane</keyword>
<keyword id="KW-0488">Methylation</keyword>
<keyword id="KW-0602">Photosynthesis</keyword>
<keyword id="KW-0605">Phycobilisome</keyword>
<keyword id="KW-1185">Reference proteome</keyword>
<keyword id="KW-0793">Thylakoid</keyword>
<keyword id="KW-0813">Transport</keyword>
<comment type="function">
    <text>Light-harvesting photosynthetic bile pigment-protein from the phycobiliprotein complex.</text>
</comment>
<comment type="subunit">
    <text evidence="1">Heterodimer of an alpha and a beta chain.</text>
</comment>
<comment type="subcellular location">
    <subcellularLocation>
        <location evidence="1">Cellular thylakoid membrane</location>
        <topology evidence="1">Peripheral membrane protein</topology>
        <orientation evidence="1">Cytoplasmic side</orientation>
    </subcellularLocation>
    <text evidence="1">Forms the periphery of the phycobilisome rod.</text>
</comment>
<comment type="PTM">
    <text evidence="1">Contains three covalently linked bilin chromophores.</text>
</comment>
<comment type="similarity">
    <text evidence="2">Belongs to the phycobiliprotein family.</text>
</comment>
<sequence length="184" mass="19059">MLDAFSRSVVSADAKTAAVGAGDIAALRQYVAEGNKRLDAVNAITSNASCIVSDAVTGMICENTGLIQAGGNCYPNRRMAACLRDGEIILRYISYALLAGDASVLDDRCLNGLKETYIALGVPAQSAARAVAIMKASATAHIGETNTQANGGAKFRKMETTQGDCSALVAEAASYFDRVISAIA</sequence>
<proteinExistence type="inferred from homology"/>
<gene>
    <name type="primary">cpeB</name>
    <name type="ordered locus">SynWH7803_0485</name>
</gene>
<accession>Q08087</accession>
<accession>A5GIZ6</accession>
<feature type="chain" id="PRO_0000199203" description="C-phycoerythrin class 1 subunit beta">
    <location>
        <begin position="1"/>
        <end position="184"/>
    </location>
</feature>
<feature type="binding site" description="covalent" evidence="1">
    <location>
        <position position="50"/>
    </location>
    <ligand>
        <name>(2R,3E)-phycoerythrobilin</name>
        <dbReference type="ChEBI" id="CHEBI:85276"/>
        <label>1</label>
    </ligand>
</feature>
<feature type="binding site" description="covalent" evidence="1">
    <location>
        <position position="61"/>
    </location>
    <ligand>
        <name>(2R,3E)-phycoerythrobilin</name>
        <dbReference type="ChEBI" id="CHEBI:85276"/>
        <label>1</label>
    </ligand>
</feature>
<feature type="binding site" description="covalent" evidence="1">
    <location>
        <position position="82"/>
    </location>
    <ligand>
        <name>(2R,3E)-phycoerythrobilin</name>
        <dbReference type="ChEBI" id="CHEBI:85276"/>
        <label>2</label>
    </ligand>
</feature>
<feature type="binding site" description="covalent" evidence="1">
    <location>
        <position position="165"/>
    </location>
    <ligand>
        <name>(2R,3E)-phycoerythrobilin</name>
        <dbReference type="ChEBI" id="CHEBI:85276"/>
        <label>3</label>
    </ligand>
</feature>
<feature type="modified residue" description="N4-methylasparagine" evidence="1">
    <location>
        <position position="72"/>
    </location>
</feature>
<organism>
    <name type="scientific">Synechococcus sp. (strain WH7803)</name>
    <dbReference type="NCBI Taxonomy" id="32051"/>
    <lineage>
        <taxon>Bacteria</taxon>
        <taxon>Bacillati</taxon>
        <taxon>Cyanobacteriota</taxon>
        <taxon>Cyanophyceae</taxon>
        <taxon>Synechococcales</taxon>
        <taxon>Synechococcaceae</taxon>
        <taxon>Synechococcus</taxon>
    </lineage>
</organism>
<name>PHEB1_SYNPW</name>
<reference key="1">
    <citation type="journal article" date="1994" name="Plant Mol. Biol.">
        <title>Organization and transcription of the class I phycoerythrin genes of the marine cyanobacterium Synechococcus sp. WH7803.</title>
        <authorList>
            <person name="Newman J."/>
            <person name="Mann N.H."/>
            <person name="Carr N.G."/>
        </authorList>
    </citation>
    <scope>NUCLEOTIDE SEQUENCE [GENOMIC DNA]</scope>
</reference>
<reference key="2">
    <citation type="submission" date="2006-05" db="EMBL/GenBank/DDBJ databases">
        <authorList>
            <consortium name="Genoscope"/>
        </authorList>
    </citation>
    <scope>NUCLEOTIDE SEQUENCE [LARGE SCALE GENOMIC DNA]</scope>
    <source>
        <strain>WH7803</strain>
    </source>
</reference>
<dbReference type="EMBL" id="X72961">
    <property type="protein sequence ID" value="CAA51464.1"/>
    <property type="molecule type" value="Genomic_DNA"/>
</dbReference>
<dbReference type="EMBL" id="CT971583">
    <property type="protein sequence ID" value="CAK22911.1"/>
    <property type="molecule type" value="Genomic_DNA"/>
</dbReference>
<dbReference type="SMR" id="Q08087"/>
<dbReference type="STRING" id="32051.SynWH7803_0485"/>
<dbReference type="KEGG" id="syx:SynWH7803_0485"/>
<dbReference type="eggNOG" id="ENOG502ZAPU">
    <property type="taxonomic scope" value="Bacteria"/>
</dbReference>
<dbReference type="HOGENOM" id="CLU_104219_0_0_3"/>
<dbReference type="OrthoDB" id="512145at2"/>
<dbReference type="Proteomes" id="UP000001566">
    <property type="component" value="Chromosome"/>
</dbReference>
<dbReference type="GO" id="GO:0030089">
    <property type="term" value="C:phycobilisome"/>
    <property type="evidence" value="ECO:0007669"/>
    <property type="project" value="UniProtKB-KW"/>
</dbReference>
<dbReference type="GO" id="GO:0031676">
    <property type="term" value="C:plasma membrane-derived thylakoid membrane"/>
    <property type="evidence" value="ECO:0007669"/>
    <property type="project" value="UniProtKB-SubCell"/>
</dbReference>
<dbReference type="GO" id="GO:0015979">
    <property type="term" value="P:photosynthesis"/>
    <property type="evidence" value="ECO:0007669"/>
    <property type="project" value="UniProtKB-KW"/>
</dbReference>
<dbReference type="Gene3D" id="1.10.490.20">
    <property type="entry name" value="Phycocyanins"/>
    <property type="match status" value="1"/>
</dbReference>
<dbReference type="InterPro" id="IPR009050">
    <property type="entry name" value="Globin-like_sf"/>
</dbReference>
<dbReference type="InterPro" id="IPR012128">
    <property type="entry name" value="Phycobilisome_asu/bsu"/>
</dbReference>
<dbReference type="InterPro" id="IPR038719">
    <property type="entry name" value="Phycobilisome_asu/bsu_sf"/>
</dbReference>
<dbReference type="PANTHER" id="PTHR34011:SF7">
    <property type="entry name" value="C-PHYCOCYANIN BETA SUBUNIT"/>
    <property type="match status" value="1"/>
</dbReference>
<dbReference type="PANTHER" id="PTHR34011">
    <property type="entry name" value="PHYCOBILISOME 32.1 KDA LINKER POLYPEPTIDE, PHYCOCYANIN-ASSOCIATED, ROD 2-RELATED"/>
    <property type="match status" value="1"/>
</dbReference>
<dbReference type="Pfam" id="PF00502">
    <property type="entry name" value="Phycobilisome"/>
    <property type="match status" value="1"/>
</dbReference>
<dbReference type="PIRSF" id="PIRSF000081">
    <property type="entry name" value="Phycocyanin"/>
    <property type="match status" value="1"/>
</dbReference>
<dbReference type="SUPFAM" id="SSF46458">
    <property type="entry name" value="Globin-like"/>
    <property type="match status" value="1"/>
</dbReference>
<evidence type="ECO:0000250" key="1"/>
<evidence type="ECO:0000305" key="2"/>